<sequence length="481" mass="51361">MSEELLSFEPATGEQLWRGKVSDVDAEVEIARRAWPEWAAKPVTFRTETLRRFADRVKAESEAFADLIARETGKPLWEARTEVESVANKVDISVKAYAERTPNRRIEGAMGLRSAVRHKPHGALAVLGPYNFPAHLPNGHIVPALIAGNSVVFKPSEKTPAVGAKLVELLHSAGVPQEVLRLVVGGPDTGKALAAHPGIDGLLFTGSARTGLALNRQFAGQPGKMLALEMGGNNPIVAWDTADIRTAAILIVQSAFLSAGQRCSNARRLIVKDSLADALIAEVRELANRLIVDHPHADPAPYMGPVIDNEAADGLTESFLVLMSNGGQVIRHMTRPVAGRPFLTPGIIDVTTMAERPDVELFGPLLQVIRVETFEAAIAEANNTAFGLSAALIGGTPQLYDQFWANARAGVINWNRPTNGASSAAPFGGVGLSGNHRPSAFYAADYCAYPVASAESDALRASIGVGLRDPEGSQLVTKKYL</sequence>
<gene>
    <name evidence="1" type="primary">astD</name>
    <name type="ordered locus">Sala_0773</name>
</gene>
<accession>Q1GV29</accession>
<reference key="1">
    <citation type="journal article" date="2009" name="Proc. Natl. Acad. Sci. U.S.A.">
        <title>The genomic basis of trophic strategy in marine bacteria.</title>
        <authorList>
            <person name="Lauro F.M."/>
            <person name="McDougald D."/>
            <person name="Thomas T."/>
            <person name="Williams T.J."/>
            <person name="Egan S."/>
            <person name="Rice S."/>
            <person name="DeMaere M.Z."/>
            <person name="Ting L."/>
            <person name="Ertan H."/>
            <person name="Johnson J."/>
            <person name="Ferriera S."/>
            <person name="Lapidus A."/>
            <person name="Anderson I."/>
            <person name="Kyrpides N."/>
            <person name="Munk A.C."/>
            <person name="Detter C."/>
            <person name="Han C.S."/>
            <person name="Brown M.V."/>
            <person name="Robb F.T."/>
            <person name="Kjelleberg S."/>
            <person name="Cavicchioli R."/>
        </authorList>
    </citation>
    <scope>NUCLEOTIDE SEQUENCE [LARGE SCALE GENOMIC DNA]</scope>
    <source>
        <strain>DSM 13593 / LMG 18877 / RB2256</strain>
    </source>
</reference>
<dbReference type="EC" id="1.2.1.71" evidence="1"/>
<dbReference type="EMBL" id="CP000356">
    <property type="protein sequence ID" value="ABF52493.1"/>
    <property type="molecule type" value="Genomic_DNA"/>
</dbReference>
<dbReference type="RefSeq" id="WP_011541083.1">
    <property type="nucleotide sequence ID" value="NC_008048.1"/>
</dbReference>
<dbReference type="SMR" id="Q1GV29"/>
<dbReference type="STRING" id="317655.Sala_0773"/>
<dbReference type="KEGG" id="sal:Sala_0773"/>
<dbReference type="eggNOG" id="COG1012">
    <property type="taxonomic scope" value="Bacteria"/>
</dbReference>
<dbReference type="HOGENOM" id="CLU_005391_1_0_5"/>
<dbReference type="OrthoDB" id="9802947at2"/>
<dbReference type="UniPathway" id="UPA00185">
    <property type="reaction ID" value="UER00282"/>
</dbReference>
<dbReference type="Proteomes" id="UP000006578">
    <property type="component" value="Chromosome"/>
</dbReference>
<dbReference type="GO" id="GO:0043824">
    <property type="term" value="F:succinylglutamate-semialdehyde dehydrogenase activity"/>
    <property type="evidence" value="ECO:0007669"/>
    <property type="project" value="UniProtKB-EC"/>
</dbReference>
<dbReference type="GO" id="GO:0019544">
    <property type="term" value="P:arginine catabolic process to glutamate"/>
    <property type="evidence" value="ECO:0007669"/>
    <property type="project" value="UniProtKB-UniRule"/>
</dbReference>
<dbReference type="GO" id="GO:0019545">
    <property type="term" value="P:arginine catabolic process to succinate"/>
    <property type="evidence" value="ECO:0007669"/>
    <property type="project" value="UniProtKB-UniRule"/>
</dbReference>
<dbReference type="CDD" id="cd07095">
    <property type="entry name" value="ALDH_SGSD_AstD"/>
    <property type="match status" value="1"/>
</dbReference>
<dbReference type="FunFam" id="3.40.605.10:FF:000010">
    <property type="entry name" value="N-succinylglutamate 5-semialdehyde dehydrogenase"/>
    <property type="match status" value="1"/>
</dbReference>
<dbReference type="Gene3D" id="3.40.605.10">
    <property type="entry name" value="Aldehyde Dehydrogenase, Chain A, domain 1"/>
    <property type="match status" value="1"/>
</dbReference>
<dbReference type="Gene3D" id="3.40.309.10">
    <property type="entry name" value="Aldehyde Dehydrogenase, Chain A, domain 2"/>
    <property type="match status" value="1"/>
</dbReference>
<dbReference type="HAMAP" id="MF_01174">
    <property type="entry name" value="Aldedh_AstD"/>
    <property type="match status" value="1"/>
</dbReference>
<dbReference type="InterPro" id="IPR016161">
    <property type="entry name" value="Ald_DH/histidinol_DH"/>
</dbReference>
<dbReference type="InterPro" id="IPR016163">
    <property type="entry name" value="Ald_DH_C"/>
</dbReference>
<dbReference type="InterPro" id="IPR016160">
    <property type="entry name" value="Ald_DH_CS_CYS"/>
</dbReference>
<dbReference type="InterPro" id="IPR029510">
    <property type="entry name" value="Ald_DH_CS_GLU"/>
</dbReference>
<dbReference type="InterPro" id="IPR016162">
    <property type="entry name" value="Ald_DH_N"/>
</dbReference>
<dbReference type="InterPro" id="IPR015590">
    <property type="entry name" value="Aldehyde_DH_dom"/>
</dbReference>
<dbReference type="InterPro" id="IPR017649">
    <property type="entry name" value="SuccinylGlu_semiald_DH_AstD"/>
</dbReference>
<dbReference type="NCBIfam" id="TIGR03240">
    <property type="entry name" value="arg_catab_astD"/>
    <property type="match status" value="1"/>
</dbReference>
<dbReference type="NCBIfam" id="NF006992">
    <property type="entry name" value="PRK09457.1"/>
    <property type="match status" value="1"/>
</dbReference>
<dbReference type="PANTHER" id="PTHR11699">
    <property type="entry name" value="ALDEHYDE DEHYDROGENASE-RELATED"/>
    <property type="match status" value="1"/>
</dbReference>
<dbReference type="Pfam" id="PF00171">
    <property type="entry name" value="Aldedh"/>
    <property type="match status" value="1"/>
</dbReference>
<dbReference type="SUPFAM" id="SSF53720">
    <property type="entry name" value="ALDH-like"/>
    <property type="match status" value="1"/>
</dbReference>
<dbReference type="PROSITE" id="PS00070">
    <property type="entry name" value="ALDEHYDE_DEHYDR_CYS"/>
    <property type="match status" value="1"/>
</dbReference>
<dbReference type="PROSITE" id="PS00687">
    <property type="entry name" value="ALDEHYDE_DEHYDR_GLU"/>
    <property type="match status" value="1"/>
</dbReference>
<feature type="chain" id="PRO_0000262430" description="N-succinylglutamate 5-semialdehyde dehydrogenase">
    <location>
        <begin position="1"/>
        <end position="481"/>
    </location>
</feature>
<feature type="active site" evidence="1">
    <location>
        <position position="229"/>
    </location>
</feature>
<feature type="active site" evidence="1">
    <location>
        <position position="263"/>
    </location>
</feature>
<feature type="binding site" evidence="1">
    <location>
        <begin position="206"/>
        <end position="211"/>
    </location>
    <ligand>
        <name>NAD(+)</name>
        <dbReference type="ChEBI" id="CHEBI:57540"/>
    </ligand>
</feature>
<comment type="function">
    <text evidence="1">Catalyzes the NAD-dependent reduction of succinylglutamate semialdehyde into succinylglutamate.</text>
</comment>
<comment type="catalytic activity">
    <reaction evidence="1">
        <text>N-succinyl-L-glutamate 5-semialdehyde + NAD(+) + H2O = N-succinyl-L-glutamate + NADH + 2 H(+)</text>
        <dbReference type="Rhea" id="RHEA:10812"/>
        <dbReference type="ChEBI" id="CHEBI:15377"/>
        <dbReference type="ChEBI" id="CHEBI:15378"/>
        <dbReference type="ChEBI" id="CHEBI:57540"/>
        <dbReference type="ChEBI" id="CHEBI:57945"/>
        <dbReference type="ChEBI" id="CHEBI:58520"/>
        <dbReference type="ChEBI" id="CHEBI:58763"/>
        <dbReference type="EC" id="1.2.1.71"/>
    </reaction>
</comment>
<comment type="pathway">
    <text evidence="1">Amino-acid degradation; L-arginine degradation via AST pathway; L-glutamate and succinate from L-arginine: step 4/5.</text>
</comment>
<comment type="similarity">
    <text evidence="1">Belongs to the aldehyde dehydrogenase family. AstD subfamily.</text>
</comment>
<proteinExistence type="inferred from homology"/>
<keyword id="KW-0056">Arginine metabolism</keyword>
<keyword id="KW-0520">NAD</keyword>
<keyword id="KW-0560">Oxidoreductase</keyword>
<keyword id="KW-1185">Reference proteome</keyword>
<name>ASTD_SPHAL</name>
<protein>
    <recommendedName>
        <fullName evidence="1">N-succinylglutamate 5-semialdehyde dehydrogenase</fullName>
        <ecNumber evidence="1">1.2.1.71</ecNumber>
    </recommendedName>
    <alternativeName>
        <fullName evidence="1">Succinylglutamic semialdehyde dehydrogenase</fullName>
        <shortName evidence="1">SGSD</shortName>
    </alternativeName>
</protein>
<organism>
    <name type="scientific">Sphingopyxis alaskensis (strain DSM 13593 / LMG 18877 / RB2256)</name>
    <name type="common">Sphingomonas alaskensis</name>
    <dbReference type="NCBI Taxonomy" id="317655"/>
    <lineage>
        <taxon>Bacteria</taxon>
        <taxon>Pseudomonadati</taxon>
        <taxon>Pseudomonadota</taxon>
        <taxon>Alphaproteobacteria</taxon>
        <taxon>Sphingomonadales</taxon>
        <taxon>Sphingomonadaceae</taxon>
        <taxon>Sphingopyxis</taxon>
    </lineage>
</organism>
<evidence type="ECO:0000255" key="1">
    <source>
        <dbReference type="HAMAP-Rule" id="MF_01174"/>
    </source>
</evidence>